<feature type="chain" id="PRO_1000139544" description="CTP synthase">
    <location>
        <begin position="1"/>
        <end position="542"/>
    </location>
</feature>
<feature type="domain" description="Glutamine amidotransferase type-1" evidence="1">
    <location>
        <begin position="291"/>
        <end position="541"/>
    </location>
</feature>
<feature type="region of interest" description="Amidoligase domain" evidence="1">
    <location>
        <begin position="1"/>
        <end position="265"/>
    </location>
</feature>
<feature type="active site" description="Nucleophile; for glutamine hydrolysis" evidence="1">
    <location>
        <position position="380"/>
    </location>
</feature>
<feature type="active site" evidence="1">
    <location>
        <position position="514"/>
    </location>
</feature>
<feature type="active site" evidence="1">
    <location>
        <position position="516"/>
    </location>
</feature>
<feature type="binding site" evidence="1">
    <location>
        <position position="13"/>
    </location>
    <ligand>
        <name>CTP</name>
        <dbReference type="ChEBI" id="CHEBI:37563"/>
        <note>allosteric inhibitor</note>
    </ligand>
</feature>
<feature type="binding site" evidence="1">
    <location>
        <position position="13"/>
    </location>
    <ligand>
        <name>UTP</name>
        <dbReference type="ChEBI" id="CHEBI:46398"/>
    </ligand>
</feature>
<feature type="binding site" evidence="1">
    <location>
        <begin position="14"/>
        <end position="19"/>
    </location>
    <ligand>
        <name>ATP</name>
        <dbReference type="ChEBI" id="CHEBI:30616"/>
    </ligand>
</feature>
<feature type="binding site" evidence="1">
    <location>
        <position position="71"/>
    </location>
    <ligand>
        <name>ATP</name>
        <dbReference type="ChEBI" id="CHEBI:30616"/>
    </ligand>
</feature>
<feature type="binding site" evidence="1">
    <location>
        <position position="71"/>
    </location>
    <ligand>
        <name>Mg(2+)</name>
        <dbReference type="ChEBI" id="CHEBI:18420"/>
    </ligand>
</feature>
<feature type="binding site" evidence="1">
    <location>
        <position position="139"/>
    </location>
    <ligand>
        <name>Mg(2+)</name>
        <dbReference type="ChEBI" id="CHEBI:18420"/>
    </ligand>
</feature>
<feature type="binding site" evidence="1">
    <location>
        <begin position="146"/>
        <end position="148"/>
    </location>
    <ligand>
        <name>CTP</name>
        <dbReference type="ChEBI" id="CHEBI:37563"/>
        <note>allosteric inhibitor</note>
    </ligand>
</feature>
<feature type="binding site" evidence="1">
    <location>
        <begin position="186"/>
        <end position="191"/>
    </location>
    <ligand>
        <name>CTP</name>
        <dbReference type="ChEBI" id="CHEBI:37563"/>
        <note>allosteric inhibitor</note>
    </ligand>
</feature>
<feature type="binding site" evidence="1">
    <location>
        <begin position="186"/>
        <end position="191"/>
    </location>
    <ligand>
        <name>UTP</name>
        <dbReference type="ChEBI" id="CHEBI:46398"/>
    </ligand>
</feature>
<feature type="binding site" evidence="1">
    <location>
        <position position="222"/>
    </location>
    <ligand>
        <name>CTP</name>
        <dbReference type="ChEBI" id="CHEBI:37563"/>
        <note>allosteric inhibitor</note>
    </ligand>
</feature>
<feature type="binding site" evidence="1">
    <location>
        <position position="222"/>
    </location>
    <ligand>
        <name>UTP</name>
        <dbReference type="ChEBI" id="CHEBI:46398"/>
    </ligand>
</feature>
<feature type="binding site" evidence="1">
    <location>
        <position position="353"/>
    </location>
    <ligand>
        <name>L-glutamine</name>
        <dbReference type="ChEBI" id="CHEBI:58359"/>
    </ligand>
</feature>
<feature type="binding site" evidence="1">
    <location>
        <begin position="381"/>
        <end position="384"/>
    </location>
    <ligand>
        <name>L-glutamine</name>
        <dbReference type="ChEBI" id="CHEBI:58359"/>
    </ligand>
</feature>
<feature type="binding site" evidence="1">
    <location>
        <position position="404"/>
    </location>
    <ligand>
        <name>L-glutamine</name>
        <dbReference type="ChEBI" id="CHEBI:58359"/>
    </ligand>
</feature>
<feature type="binding site" evidence="1">
    <location>
        <position position="469"/>
    </location>
    <ligand>
        <name>L-glutamine</name>
        <dbReference type="ChEBI" id="CHEBI:58359"/>
    </ligand>
</feature>
<organism>
    <name type="scientific">Rhizobium etli (strain CIAT 652)</name>
    <dbReference type="NCBI Taxonomy" id="491916"/>
    <lineage>
        <taxon>Bacteria</taxon>
        <taxon>Pseudomonadati</taxon>
        <taxon>Pseudomonadota</taxon>
        <taxon>Alphaproteobacteria</taxon>
        <taxon>Hyphomicrobiales</taxon>
        <taxon>Rhizobiaceae</taxon>
        <taxon>Rhizobium/Agrobacterium group</taxon>
        <taxon>Rhizobium</taxon>
    </lineage>
</organism>
<name>PYRG_RHIE6</name>
<sequence length="542" mass="59968">MARYVFITGGVVSSLGKGIAAAALGALLQARGYRVRLRKLDPYLNVDPGTMSPTQHGEVFVTDDGAETDLDLGHYERFTGRSATKTDNITTGRIYKNIIDKERRGDYLGATVQVIPHVTNEIKDFVTEGNKDYDFVICEIGGTVGDIEAMPFMEAIRQLGNDLPRGTAVYVHLTLMPYIPAAGELKTKPTQHSVKELQALGIHPDILLVRADREIPEAERRKLSLFCNVRPSAVIQALDVANIYDVPMAYHKEGLDDEVLAAFGIEPAPKPRLDQWEEVCNRIRTPEGEVTIAIVGKYTGLKDAYKSLIEALHHGGIANRVKVKLEWIESEVFEKEDPAPYLEKVHGILVPGGFGERGSEGKIHAARFARERKVPYFGICFGMQMAVIEAARNLADVPDASSTEFGPAKEPVVGLMTEWVKGNELQKRTAAGDLGGTMRLGAYKAALKKGTKISEIYGSTDISERHRHRYEVNIDYKDRLESCGLVFSGMSPDGVLPETIEYPDHPWFIGVQYHPELKSRPLDPHPLFASFIEAATEQSRLV</sequence>
<gene>
    <name evidence="1" type="primary">pyrG</name>
    <name type="ordered locus">RHECIAT_CH0002271</name>
</gene>
<comment type="function">
    <text evidence="1">Catalyzes the ATP-dependent amination of UTP to CTP with either L-glutamine or ammonia as the source of nitrogen. Regulates intracellular CTP levels through interactions with the four ribonucleotide triphosphates.</text>
</comment>
<comment type="catalytic activity">
    <reaction evidence="1">
        <text>UTP + L-glutamine + ATP + H2O = CTP + L-glutamate + ADP + phosphate + 2 H(+)</text>
        <dbReference type="Rhea" id="RHEA:26426"/>
        <dbReference type="ChEBI" id="CHEBI:15377"/>
        <dbReference type="ChEBI" id="CHEBI:15378"/>
        <dbReference type="ChEBI" id="CHEBI:29985"/>
        <dbReference type="ChEBI" id="CHEBI:30616"/>
        <dbReference type="ChEBI" id="CHEBI:37563"/>
        <dbReference type="ChEBI" id="CHEBI:43474"/>
        <dbReference type="ChEBI" id="CHEBI:46398"/>
        <dbReference type="ChEBI" id="CHEBI:58359"/>
        <dbReference type="ChEBI" id="CHEBI:456216"/>
        <dbReference type="EC" id="6.3.4.2"/>
    </reaction>
</comment>
<comment type="catalytic activity">
    <reaction evidence="1">
        <text>L-glutamine + H2O = L-glutamate + NH4(+)</text>
        <dbReference type="Rhea" id="RHEA:15889"/>
        <dbReference type="ChEBI" id="CHEBI:15377"/>
        <dbReference type="ChEBI" id="CHEBI:28938"/>
        <dbReference type="ChEBI" id="CHEBI:29985"/>
        <dbReference type="ChEBI" id="CHEBI:58359"/>
    </reaction>
</comment>
<comment type="catalytic activity">
    <reaction evidence="1">
        <text>UTP + NH4(+) + ATP = CTP + ADP + phosphate + 2 H(+)</text>
        <dbReference type="Rhea" id="RHEA:16597"/>
        <dbReference type="ChEBI" id="CHEBI:15378"/>
        <dbReference type="ChEBI" id="CHEBI:28938"/>
        <dbReference type="ChEBI" id="CHEBI:30616"/>
        <dbReference type="ChEBI" id="CHEBI:37563"/>
        <dbReference type="ChEBI" id="CHEBI:43474"/>
        <dbReference type="ChEBI" id="CHEBI:46398"/>
        <dbReference type="ChEBI" id="CHEBI:456216"/>
    </reaction>
</comment>
<comment type="activity regulation">
    <text evidence="1">Allosterically activated by GTP, when glutamine is the substrate; GTP has no effect on the reaction when ammonia is the substrate. The allosteric effector GTP functions by stabilizing the protein conformation that binds the tetrahedral intermediate(s) formed during glutamine hydrolysis. Inhibited by the product CTP, via allosteric rather than competitive inhibition.</text>
</comment>
<comment type="pathway">
    <text evidence="1">Pyrimidine metabolism; CTP biosynthesis via de novo pathway; CTP from UDP: step 2/2.</text>
</comment>
<comment type="subunit">
    <text evidence="1">Homotetramer.</text>
</comment>
<comment type="miscellaneous">
    <text evidence="1">CTPSs have evolved a hybrid strategy for distinguishing between UTP and CTP. The overlapping regions of the product feedback inhibitory and substrate sites recognize a common feature in both compounds, the triphosphate moiety. To differentiate isosteric substrate and product pyrimidine rings, an additional pocket far from the expected kinase/ligase catalytic site, specifically recognizes the cytosine and ribose portions of the product inhibitor.</text>
</comment>
<comment type="similarity">
    <text evidence="1">Belongs to the CTP synthase family.</text>
</comment>
<keyword id="KW-0067">ATP-binding</keyword>
<keyword id="KW-0315">Glutamine amidotransferase</keyword>
<keyword id="KW-0436">Ligase</keyword>
<keyword id="KW-0460">Magnesium</keyword>
<keyword id="KW-0479">Metal-binding</keyword>
<keyword id="KW-0547">Nucleotide-binding</keyword>
<keyword id="KW-0665">Pyrimidine biosynthesis</keyword>
<proteinExistence type="inferred from homology"/>
<dbReference type="EC" id="6.3.4.2" evidence="1"/>
<dbReference type="EMBL" id="CP001074">
    <property type="protein sequence ID" value="ACE91226.1"/>
    <property type="molecule type" value="Genomic_DNA"/>
</dbReference>
<dbReference type="SMR" id="B3Q0M2"/>
<dbReference type="KEGG" id="rec:RHECIAT_CH0002271"/>
<dbReference type="eggNOG" id="COG0504">
    <property type="taxonomic scope" value="Bacteria"/>
</dbReference>
<dbReference type="HOGENOM" id="CLU_011675_5_0_5"/>
<dbReference type="UniPathway" id="UPA00159">
    <property type="reaction ID" value="UER00277"/>
</dbReference>
<dbReference type="Proteomes" id="UP000008817">
    <property type="component" value="Chromosome"/>
</dbReference>
<dbReference type="GO" id="GO:0005829">
    <property type="term" value="C:cytosol"/>
    <property type="evidence" value="ECO:0007669"/>
    <property type="project" value="TreeGrafter"/>
</dbReference>
<dbReference type="GO" id="GO:0005524">
    <property type="term" value="F:ATP binding"/>
    <property type="evidence" value="ECO:0007669"/>
    <property type="project" value="UniProtKB-KW"/>
</dbReference>
<dbReference type="GO" id="GO:0003883">
    <property type="term" value="F:CTP synthase activity"/>
    <property type="evidence" value="ECO:0007669"/>
    <property type="project" value="UniProtKB-UniRule"/>
</dbReference>
<dbReference type="GO" id="GO:0004359">
    <property type="term" value="F:glutaminase activity"/>
    <property type="evidence" value="ECO:0007669"/>
    <property type="project" value="RHEA"/>
</dbReference>
<dbReference type="GO" id="GO:0042802">
    <property type="term" value="F:identical protein binding"/>
    <property type="evidence" value="ECO:0007669"/>
    <property type="project" value="TreeGrafter"/>
</dbReference>
<dbReference type="GO" id="GO:0046872">
    <property type="term" value="F:metal ion binding"/>
    <property type="evidence" value="ECO:0007669"/>
    <property type="project" value="UniProtKB-KW"/>
</dbReference>
<dbReference type="GO" id="GO:0044210">
    <property type="term" value="P:'de novo' CTP biosynthetic process"/>
    <property type="evidence" value="ECO:0007669"/>
    <property type="project" value="UniProtKB-UniRule"/>
</dbReference>
<dbReference type="GO" id="GO:0019856">
    <property type="term" value="P:pyrimidine nucleobase biosynthetic process"/>
    <property type="evidence" value="ECO:0007669"/>
    <property type="project" value="TreeGrafter"/>
</dbReference>
<dbReference type="CDD" id="cd03113">
    <property type="entry name" value="CTPS_N"/>
    <property type="match status" value="1"/>
</dbReference>
<dbReference type="CDD" id="cd01746">
    <property type="entry name" value="GATase1_CTP_Synthase"/>
    <property type="match status" value="1"/>
</dbReference>
<dbReference type="FunFam" id="3.40.50.300:FF:000009">
    <property type="entry name" value="CTP synthase"/>
    <property type="match status" value="1"/>
</dbReference>
<dbReference type="FunFam" id="3.40.50.880:FF:000002">
    <property type="entry name" value="CTP synthase"/>
    <property type="match status" value="1"/>
</dbReference>
<dbReference type="Gene3D" id="3.40.50.880">
    <property type="match status" value="1"/>
</dbReference>
<dbReference type="Gene3D" id="3.40.50.300">
    <property type="entry name" value="P-loop containing nucleotide triphosphate hydrolases"/>
    <property type="match status" value="1"/>
</dbReference>
<dbReference type="HAMAP" id="MF_01227">
    <property type="entry name" value="PyrG"/>
    <property type="match status" value="1"/>
</dbReference>
<dbReference type="InterPro" id="IPR029062">
    <property type="entry name" value="Class_I_gatase-like"/>
</dbReference>
<dbReference type="InterPro" id="IPR004468">
    <property type="entry name" value="CTP_synthase"/>
</dbReference>
<dbReference type="InterPro" id="IPR017456">
    <property type="entry name" value="CTP_synthase_N"/>
</dbReference>
<dbReference type="InterPro" id="IPR017926">
    <property type="entry name" value="GATASE"/>
</dbReference>
<dbReference type="InterPro" id="IPR033828">
    <property type="entry name" value="GATase1_CTP_Synthase"/>
</dbReference>
<dbReference type="InterPro" id="IPR027417">
    <property type="entry name" value="P-loop_NTPase"/>
</dbReference>
<dbReference type="NCBIfam" id="NF003792">
    <property type="entry name" value="PRK05380.1"/>
    <property type="match status" value="1"/>
</dbReference>
<dbReference type="NCBIfam" id="TIGR00337">
    <property type="entry name" value="PyrG"/>
    <property type="match status" value="1"/>
</dbReference>
<dbReference type="PANTHER" id="PTHR11550">
    <property type="entry name" value="CTP SYNTHASE"/>
    <property type="match status" value="1"/>
</dbReference>
<dbReference type="PANTHER" id="PTHR11550:SF0">
    <property type="entry name" value="CTP SYNTHASE-RELATED"/>
    <property type="match status" value="1"/>
</dbReference>
<dbReference type="Pfam" id="PF06418">
    <property type="entry name" value="CTP_synth_N"/>
    <property type="match status" value="1"/>
</dbReference>
<dbReference type="Pfam" id="PF00117">
    <property type="entry name" value="GATase"/>
    <property type="match status" value="1"/>
</dbReference>
<dbReference type="SUPFAM" id="SSF52317">
    <property type="entry name" value="Class I glutamine amidotransferase-like"/>
    <property type="match status" value="1"/>
</dbReference>
<dbReference type="SUPFAM" id="SSF52540">
    <property type="entry name" value="P-loop containing nucleoside triphosphate hydrolases"/>
    <property type="match status" value="1"/>
</dbReference>
<dbReference type="PROSITE" id="PS51273">
    <property type="entry name" value="GATASE_TYPE_1"/>
    <property type="match status" value="1"/>
</dbReference>
<evidence type="ECO:0000255" key="1">
    <source>
        <dbReference type="HAMAP-Rule" id="MF_01227"/>
    </source>
</evidence>
<accession>B3Q0M2</accession>
<protein>
    <recommendedName>
        <fullName evidence="1">CTP synthase</fullName>
        <ecNumber evidence="1">6.3.4.2</ecNumber>
    </recommendedName>
    <alternativeName>
        <fullName evidence="1">Cytidine 5'-triphosphate synthase</fullName>
    </alternativeName>
    <alternativeName>
        <fullName evidence="1">Cytidine triphosphate synthetase</fullName>
        <shortName evidence="1">CTP synthetase</shortName>
        <shortName evidence="1">CTPS</shortName>
    </alternativeName>
    <alternativeName>
        <fullName evidence="1">UTP--ammonia ligase</fullName>
    </alternativeName>
</protein>
<reference key="1">
    <citation type="journal article" date="2010" name="Appl. Environ. Microbiol.">
        <title>Conserved symbiotic plasmid DNA sequences in the multireplicon pangenomic structure of Rhizobium etli.</title>
        <authorList>
            <person name="Gonzalez V."/>
            <person name="Acosta J.L."/>
            <person name="Santamaria R.I."/>
            <person name="Bustos P."/>
            <person name="Fernandez J.L."/>
            <person name="Hernandez Gonzalez I.L."/>
            <person name="Diaz R."/>
            <person name="Flores M."/>
            <person name="Palacios R."/>
            <person name="Mora J."/>
            <person name="Davila G."/>
        </authorList>
    </citation>
    <scope>NUCLEOTIDE SEQUENCE [LARGE SCALE GENOMIC DNA]</scope>
    <source>
        <strain>CIAT 652</strain>
    </source>
</reference>